<protein>
    <recommendedName>
        <fullName>Uncharacterized protein CPE1502</fullName>
    </recommendedName>
</protein>
<reference key="1">
    <citation type="journal article" date="1994" name="Mol. Microbiol.">
        <title>Identification and molecular analysis of a locus that regulates extracellular toxin production in Clostridium perfringens.</title>
        <authorList>
            <person name="Lyristis M."/>
            <person name="Bryant A.E."/>
            <person name="Sloan J."/>
            <person name="Awad M.M."/>
            <person name="Nisbet I.T."/>
            <person name="Stevens D.L."/>
            <person name="Rood J.I."/>
        </authorList>
    </citation>
    <scope>NUCLEOTIDE SEQUENCE [GENOMIC DNA]</scope>
    <source>
        <strain>JIR4025</strain>
    </source>
</reference>
<reference key="2">
    <citation type="journal article" date="2002" name="Proc. Natl. Acad. Sci. U.S.A.">
        <title>Complete genome sequence of Clostridium perfringens, an anaerobic flesh-eater.</title>
        <authorList>
            <person name="Shimizu T."/>
            <person name="Ohtani K."/>
            <person name="Hirakawa H."/>
            <person name="Ohshima K."/>
            <person name="Yamashita A."/>
            <person name="Shiba T."/>
            <person name="Ogasawara N."/>
            <person name="Hattori M."/>
            <person name="Kuhara S."/>
            <person name="Hayashi H."/>
        </authorList>
    </citation>
    <scope>NUCLEOTIDE SEQUENCE [LARGE SCALE GENOMIC DNA]</scope>
    <source>
        <strain>13 / Type A</strain>
    </source>
</reference>
<organism>
    <name type="scientific">Clostridium perfringens (strain 13 / Type A)</name>
    <dbReference type="NCBI Taxonomy" id="195102"/>
    <lineage>
        <taxon>Bacteria</taxon>
        <taxon>Bacillati</taxon>
        <taxon>Bacillota</taxon>
        <taxon>Clostridia</taxon>
        <taxon>Eubacteriales</taxon>
        <taxon>Clostridiaceae</taxon>
        <taxon>Clostridium</taxon>
    </lineage>
</organism>
<sequence>MKIAVRGGHNFKAKGALGIIDETIENRKVYKALIKYLNIAGHNVIDVTPGECDVNTDLYLGVQKAEDNNSELFLSIHFDKAYDRYEGALGTGTWIYGRGGKAEIYAKRIVDNLSKGTGLKNRGVKENSKLYELRKTSMPAVLVEVCFCEATEDVRIYREKGPDLIGKLIAEAINEKEIEENIKPEGQEDSLKEKFLKSTNTKAIANLDPRDNPSSIYKDLGEIYKGERIRVLPEICDNKDYLPIIYWKDTTNIESQKVWVSAKQNYLKIDTNATVINVVTELDARYIKSQRSSKMGYVKNGERLYVHKIESGYALGTYFASNGYKTAWFTAKYISLD</sequence>
<accession>P58698</accession>
<accession>Q46214</accession>
<gene>
    <name type="ordered locus">CPE1502</name>
</gene>
<evidence type="ECO:0000255" key="1"/>
<evidence type="ECO:0000305" key="2"/>
<proteinExistence type="predicted"/>
<feature type="chain" id="PRO_0000208253" description="Uncharacterized protein CPE1502">
    <location>
        <begin position="1"/>
        <end position="337"/>
    </location>
</feature>
<feature type="domain" description="MurNAc-LAA" evidence="1">
    <location>
        <begin position="3"/>
        <end position="174"/>
    </location>
</feature>
<keyword id="KW-1185">Reference proteome</keyword>
<dbReference type="EMBL" id="U04966">
    <property type="protein sequence ID" value="AAA58948.1"/>
    <property type="molecule type" value="Genomic_DNA"/>
</dbReference>
<dbReference type="EMBL" id="BA000016">
    <property type="protein sequence ID" value="BAB81208.1"/>
    <property type="molecule type" value="Genomic_DNA"/>
</dbReference>
<dbReference type="PIR" id="S49554">
    <property type="entry name" value="S49554"/>
</dbReference>
<dbReference type="RefSeq" id="WP_011010477.1">
    <property type="nucleotide sequence ID" value="NC_003366.1"/>
</dbReference>
<dbReference type="SMR" id="P58698"/>
<dbReference type="STRING" id="195102.gene:10490766"/>
<dbReference type="KEGG" id="cpe:CPE1502"/>
<dbReference type="HOGENOM" id="CLU_823108_0_0_9"/>
<dbReference type="Proteomes" id="UP000000818">
    <property type="component" value="Chromosome"/>
</dbReference>
<dbReference type="GO" id="GO:0030288">
    <property type="term" value="C:outer membrane-bounded periplasmic space"/>
    <property type="evidence" value="ECO:0007669"/>
    <property type="project" value="TreeGrafter"/>
</dbReference>
<dbReference type="GO" id="GO:0008745">
    <property type="term" value="F:N-acetylmuramoyl-L-alanine amidase activity"/>
    <property type="evidence" value="ECO:0007669"/>
    <property type="project" value="InterPro"/>
</dbReference>
<dbReference type="GO" id="GO:0009253">
    <property type="term" value="P:peptidoglycan catabolic process"/>
    <property type="evidence" value="ECO:0007669"/>
    <property type="project" value="InterPro"/>
</dbReference>
<dbReference type="CDD" id="cd02696">
    <property type="entry name" value="MurNAc-LAA"/>
    <property type="match status" value="1"/>
</dbReference>
<dbReference type="Gene3D" id="3.40.630.40">
    <property type="entry name" value="Zn-dependent exopeptidases"/>
    <property type="match status" value="1"/>
</dbReference>
<dbReference type="InterPro" id="IPR002508">
    <property type="entry name" value="MurNAc-LAA_cat"/>
</dbReference>
<dbReference type="InterPro" id="IPR050695">
    <property type="entry name" value="N-acetylmuramoyl_amidase_3"/>
</dbReference>
<dbReference type="PANTHER" id="PTHR30404:SF8">
    <property type="entry name" value="AUTOLYSIN PH-RELATED"/>
    <property type="match status" value="1"/>
</dbReference>
<dbReference type="PANTHER" id="PTHR30404">
    <property type="entry name" value="N-ACETYLMURAMOYL-L-ALANINE AMIDASE"/>
    <property type="match status" value="1"/>
</dbReference>
<dbReference type="Pfam" id="PF01520">
    <property type="entry name" value="Amidase_3"/>
    <property type="match status" value="1"/>
</dbReference>
<dbReference type="SMART" id="SM00646">
    <property type="entry name" value="Ami_3"/>
    <property type="match status" value="1"/>
</dbReference>
<dbReference type="SUPFAM" id="SSF53187">
    <property type="entry name" value="Zn-dependent exopeptidases"/>
    <property type="match status" value="1"/>
</dbReference>
<name>Y1502_CLOPE</name>
<comment type="similarity">
    <text evidence="2">To C.perfringens pIP404 ORF10.</text>
</comment>